<feature type="chain" id="PRO_0000117894" description="NADH-ubiquinone oxidoreductase chain 4">
    <location>
        <begin position="1"/>
        <end position="488"/>
    </location>
</feature>
<feature type="transmembrane region" description="Helical" evidence="2">
    <location>
        <begin position="1"/>
        <end position="21"/>
    </location>
</feature>
<feature type="transmembrane region" description="Helical" evidence="2">
    <location>
        <begin position="34"/>
        <end position="54"/>
    </location>
</feature>
<feature type="transmembrane region" description="Helical" evidence="2">
    <location>
        <begin position="79"/>
        <end position="99"/>
    </location>
</feature>
<feature type="transmembrane region" description="Helical" evidence="2">
    <location>
        <begin position="110"/>
        <end position="130"/>
    </location>
</feature>
<feature type="transmembrane region" description="Helical" evidence="2">
    <location>
        <begin position="134"/>
        <end position="154"/>
    </location>
</feature>
<feature type="transmembrane region" description="Helical" evidence="2">
    <location>
        <begin position="164"/>
        <end position="184"/>
    </location>
</feature>
<feature type="transmembrane region" description="Helical" evidence="2">
    <location>
        <begin position="207"/>
        <end position="227"/>
    </location>
</feature>
<feature type="transmembrane region" description="Helical" evidence="2">
    <location>
        <begin position="238"/>
        <end position="258"/>
    </location>
</feature>
<feature type="transmembrane region" description="Helical" evidence="2">
    <location>
        <begin position="272"/>
        <end position="292"/>
    </location>
</feature>
<feature type="transmembrane region" description="Helical" evidence="2">
    <location>
        <begin position="301"/>
        <end position="321"/>
    </location>
</feature>
<feature type="transmembrane region" description="Helical" evidence="2">
    <location>
        <begin position="328"/>
        <end position="348"/>
    </location>
</feature>
<feature type="transmembrane region" description="Helical" evidence="2">
    <location>
        <begin position="367"/>
        <end position="387"/>
    </location>
</feature>
<feature type="transmembrane region" description="Helical" evidence="2">
    <location>
        <begin position="407"/>
        <end position="427"/>
    </location>
</feature>
<feature type="transmembrane region" description="Helical" evidence="2">
    <location>
        <begin position="452"/>
        <end position="472"/>
    </location>
</feature>
<keyword id="KW-0249">Electron transport</keyword>
<keyword id="KW-0472">Membrane</keyword>
<keyword id="KW-0496">Mitochondrion</keyword>
<keyword id="KW-0520">NAD</keyword>
<keyword id="KW-0679">Respiratory chain</keyword>
<keyword id="KW-1278">Translocase</keyword>
<keyword id="KW-0812">Transmembrane</keyword>
<keyword id="KW-1133">Transmembrane helix</keyword>
<keyword id="KW-0813">Transport</keyword>
<keyword id="KW-0830">Ubiquinone</keyword>
<protein>
    <recommendedName>
        <fullName>NADH-ubiquinone oxidoreductase chain 4</fullName>
        <ecNumber>7.1.1.2</ecNumber>
    </recommendedName>
    <alternativeName>
        <fullName>NADH dehydrogenase subunit 4</fullName>
    </alternativeName>
</protein>
<sequence>MFLLLLLIPLIGIGFVTIEGNYGLSLINNIRIKSIALTTSIINLVVSLIMFILFDFSSKQFQFIEEHYQISYFDIYLGVDGLSIYFILLTTIIMPIAILCNWNSIQSKNVLSFVVIMLLLETLLLAVFLVLDVLLFYIFFESILPPLFLLIGLFGSSNKVRASFYLFLYTLLGSLFMLLSIVAMSSIMGTTDFDALSKSNFNYVTQLFLFYGIFIAFAVKTPVSFLNTWLLKAHVESPLSGSIILAGIVLKLSLYGIFRLILPLLPKASLNYTYIIYVIGVITIIYASFSTLRTIDIKELIAYSSVSHAAVYSIGAFSNTIQGIEGSIALGLAHGFVSSGLFICAGGILYDRSSTRLITYYRGMAQVMPIFSVLFFILSLGNSGTPLTLNFIGEFMSLYGVFERMPLLGVLASTSIVFSAAYTIFMYNRIVFGGSYSIYFVENIGDVTRREFIMLLVFVVLTVLFGIYPAPILDGLHYSVSSLIYSIN</sequence>
<accession>P03913</accession>
<evidence type="ECO:0000250" key="1"/>
<evidence type="ECO:0000255" key="2"/>
<evidence type="ECO:0000305" key="3"/>
<name>NU4M_ASPAM</name>
<proteinExistence type="inferred from homology"/>
<dbReference type="EC" id="7.1.1.2"/>
<dbReference type="PIR" id="A00442">
    <property type="entry name" value="QXASM4"/>
</dbReference>
<dbReference type="SMR" id="P03913"/>
<dbReference type="GO" id="GO:0031966">
    <property type="term" value="C:mitochondrial membrane"/>
    <property type="evidence" value="ECO:0007669"/>
    <property type="project" value="UniProtKB-SubCell"/>
</dbReference>
<dbReference type="GO" id="GO:0008137">
    <property type="term" value="F:NADH dehydrogenase (ubiquinone) activity"/>
    <property type="evidence" value="ECO:0007669"/>
    <property type="project" value="UniProtKB-EC"/>
</dbReference>
<dbReference type="GO" id="GO:0048039">
    <property type="term" value="F:ubiquinone binding"/>
    <property type="evidence" value="ECO:0007669"/>
    <property type="project" value="TreeGrafter"/>
</dbReference>
<dbReference type="GO" id="GO:0042773">
    <property type="term" value="P:ATP synthesis coupled electron transport"/>
    <property type="evidence" value="ECO:0007669"/>
    <property type="project" value="InterPro"/>
</dbReference>
<dbReference type="GO" id="GO:0015990">
    <property type="term" value="P:electron transport coupled proton transport"/>
    <property type="evidence" value="ECO:0007669"/>
    <property type="project" value="TreeGrafter"/>
</dbReference>
<dbReference type="InterPro" id="IPR010227">
    <property type="entry name" value="NADH_Q_OxRdtase_chainM/4"/>
</dbReference>
<dbReference type="InterPro" id="IPR003918">
    <property type="entry name" value="NADH_UbQ_OxRdtase"/>
</dbReference>
<dbReference type="InterPro" id="IPR001750">
    <property type="entry name" value="ND/Mrp_TM"/>
</dbReference>
<dbReference type="NCBIfam" id="TIGR01972">
    <property type="entry name" value="NDH_I_M"/>
    <property type="match status" value="1"/>
</dbReference>
<dbReference type="PANTHER" id="PTHR43507">
    <property type="entry name" value="NADH-UBIQUINONE OXIDOREDUCTASE CHAIN 4"/>
    <property type="match status" value="1"/>
</dbReference>
<dbReference type="PANTHER" id="PTHR43507:SF1">
    <property type="entry name" value="NADH-UBIQUINONE OXIDOREDUCTASE CHAIN 4"/>
    <property type="match status" value="1"/>
</dbReference>
<dbReference type="Pfam" id="PF00361">
    <property type="entry name" value="Proton_antipo_M"/>
    <property type="match status" value="1"/>
</dbReference>
<dbReference type="PRINTS" id="PR01437">
    <property type="entry name" value="NUOXDRDTASE4"/>
</dbReference>
<comment type="function">
    <text evidence="1">Core subunit of the mitochondrial membrane respiratory chain NADH dehydrogenase (Complex I) that is believed to belong to the minimal assembly required for catalysis. Complex I functions in the transfer of electrons from NADH to the respiratory chain. The immediate electron acceptor for the enzyme is believed to be ubiquinone (By similarity).</text>
</comment>
<comment type="catalytic activity">
    <reaction>
        <text>a ubiquinone + NADH + 5 H(+)(in) = a ubiquinol + NAD(+) + 4 H(+)(out)</text>
        <dbReference type="Rhea" id="RHEA:29091"/>
        <dbReference type="Rhea" id="RHEA-COMP:9565"/>
        <dbReference type="Rhea" id="RHEA-COMP:9566"/>
        <dbReference type="ChEBI" id="CHEBI:15378"/>
        <dbReference type="ChEBI" id="CHEBI:16389"/>
        <dbReference type="ChEBI" id="CHEBI:17976"/>
        <dbReference type="ChEBI" id="CHEBI:57540"/>
        <dbReference type="ChEBI" id="CHEBI:57945"/>
        <dbReference type="EC" id="7.1.1.2"/>
    </reaction>
</comment>
<comment type="subcellular location">
    <subcellularLocation>
        <location evidence="1">Mitochondrion membrane</location>
        <topology evidence="1">Multi-pass membrane protein</topology>
    </subcellularLocation>
</comment>
<comment type="similarity">
    <text evidence="3">Belongs to the complex I subunit 4 family.</text>
</comment>
<gene>
    <name type="primary">ND4</name>
</gene>
<reference key="1">
    <citation type="submission" date="1984-03" db="PIR data bank">
        <authorList>
            <person name="Lazarus C.M."/>
            <person name="Kuntzel H."/>
        </authorList>
    </citation>
    <scope>NUCLEOTIDE SEQUENCE [GENOMIC DNA]</scope>
</reference>
<geneLocation type="mitochondrion"/>
<organism>
    <name type="scientific">Aspergillus amstelodami</name>
    <dbReference type="NCBI Taxonomy" id="5054"/>
    <lineage>
        <taxon>Eukaryota</taxon>
        <taxon>Fungi</taxon>
        <taxon>Dikarya</taxon>
        <taxon>Ascomycota</taxon>
        <taxon>Pezizomycotina</taxon>
        <taxon>Eurotiomycetes</taxon>
        <taxon>Eurotiomycetidae</taxon>
        <taxon>Eurotiales</taxon>
        <taxon>Aspergillaceae</taxon>
        <taxon>Aspergillus</taxon>
        <taxon>Aspergillus subgen. Aspergillus</taxon>
    </lineage>
</organism>